<evidence type="ECO:0000255" key="1">
    <source>
        <dbReference type="HAMAP-Rule" id="MF_00182"/>
    </source>
</evidence>
<sequence length="323" mass="36585">MKKEELRLIFMGTADFAVPALRALVENGYQVKAVVTMPDKPMGRGHKVSPSMVKLYAQELGLPILQPDNLNEESFLDELRTYQPHLQIVVAFRMLPRSVWQMPPMGTINLHGSLLPMYRGAAPINHAIRHGDTETGVTTFRLRHEIDTGEVLLQEKLPIGHEETFGELYERMATLGASVLVHTVDLFLEGEPVSIPQEQLPGYVGARPAPKIFKDDCRIDWDKPAEEVHNFIRSISPAPTAWTKLHRPGMESIVLKIYRTQVIEREPRHRGRFGSIIWDKKNLDVMTRKGVIRILSLQMPGKKQMDAASFLNGFALSSDMYIE</sequence>
<comment type="function">
    <text evidence="1">Attaches a formyl group to the free amino group of methionyl-tRNA(fMet). The formyl group appears to play a dual role in the initiator identity of N-formylmethionyl-tRNA by promoting its recognition by IF2 and preventing the misappropriation of this tRNA by the elongation apparatus.</text>
</comment>
<comment type="catalytic activity">
    <reaction evidence="1">
        <text>L-methionyl-tRNA(fMet) + (6R)-10-formyltetrahydrofolate = N-formyl-L-methionyl-tRNA(fMet) + (6S)-5,6,7,8-tetrahydrofolate + H(+)</text>
        <dbReference type="Rhea" id="RHEA:24380"/>
        <dbReference type="Rhea" id="RHEA-COMP:9952"/>
        <dbReference type="Rhea" id="RHEA-COMP:9953"/>
        <dbReference type="ChEBI" id="CHEBI:15378"/>
        <dbReference type="ChEBI" id="CHEBI:57453"/>
        <dbReference type="ChEBI" id="CHEBI:78530"/>
        <dbReference type="ChEBI" id="CHEBI:78844"/>
        <dbReference type="ChEBI" id="CHEBI:195366"/>
        <dbReference type="EC" id="2.1.2.9"/>
    </reaction>
</comment>
<comment type="similarity">
    <text evidence="1">Belongs to the Fmt family.</text>
</comment>
<name>FMT_PORG3</name>
<accession>B2RM92</accession>
<protein>
    <recommendedName>
        <fullName evidence="1">Methionyl-tRNA formyltransferase</fullName>
        <ecNumber evidence="1">2.1.2.9</ecNumber>
    </recommendedName>
</protein>
<keyword id="KW-0648">Protein biosynthesis</keyword>
<keyword id="KW-0808">Transferase</keyword>
<gene>
    <name evidence="1" type="primary">fmt</name>
    <name type="ordered locus">PGN_1969</name>
</gene>
<proteinExistence type="inferred from homology"/>
<feature type="chain" id="PRO_1000098426" description="Methionyl-tRNA formyltransferase">
    <location>
        <begin position="1"/>
        <end position="323"/>
    </location>
</feature>
<feature type="binding site" evidence="1">
    <location>
        <begin position="113"/>
        <end position="116"/>
    </location>
    <ligand>
        <name>(6S)-5,6,7,8-tetrahydrofolate</name>
        <dbReference type="ChEBI" id="CHEBI:57453"/>
    </ligand>
</feature>
<reference key="1">
    <citation type="journal article" date="2008" name="DNA Res.">
        <title>Determination of the genome sequence of Porphyromonas gingivalis strain ATCC 33277 and genomic comparison with strain W83 revealed extensive genome rearrangements in P. gingivalis.</title>
        <authorList>
            <person name="Naito M."/>
            <person name="Hirakawa H."/>
            <person name="Yamashita A."/>
            <person name="Ohara N."/>
            <person name="Shoji M."/>
            <person name="Yukitake H."/>
            <person name="Nakayama K."/>
            <person name="Toh H."/>
            <person name="Yoshimura F."/>
            <person name="Kuhara S."/>
            <person name="Hattori M."/>
            <person name="Hayashi T."/>
            <person name="Nakayama K."/>
        </authorList>
    </citation>
    <scope>NUCLEOTIDE SEQUENCE [LARGE SCALE GENOMIC DNA]</scope>
    <source>
        <strain>ATCC 33277 / DSM 20709 / CIP 103683 / JCM 12257 / NCTC 11834 / 2561</strain>
    </source>
</reference>
<dbReference type="EC" id="2.1.2.9" evidence="1"/>
<dbReference type="EMBL" id="AP009380">
    <property type="protein sequence ID" value="BAG34487.1"/>
    <property type="molecule type" value="Genomic_DNA"/>
</dbReference>
<dbReference type="RefSeq" id="WP_012458652.1">
    <property type="nucleotide sequence ID" value="NC_010729.1"/>
</dbReference>
<dbReference type="SMR" id="B2RM92"/>
<dbReference type="GeneID" id="29257107"/>
<dbReference type="KEGG" id="pgn:PGN_1969"/>
<dbReference type="eggNOG" id="COG0223">
    <property type="taxonomic scope" value="Bacteria"/>
</dbReference>
<dbReference type="HOGENOM" id="CLU_033347_1_1_10"/>
<dbReference type="OrthoDB" id="9802815at2"/>
<dbReference type="BioCyc" id="PGIN431947:G1G2V-2204-MONOMER"/>
<dbReference type="Proteomes" id="UP000008842">
    <property type="component" value="Chromosome"/>
</dbReference>
<dbReference type="GO" id="GO:0005829">
    <property type="term" value="C:cytosol"/>
    <property type="evidence" value="ECO:0007669"/>
    <property type="project" value="TreeGrafter"/>
</dbReference>
<dbReference type="GO" id="GO:0004479">
    <property type="term" value="F:methionyl-tRNA formyltransferase activity"/>
    <property type="evidence" value="ECO:0007669"/>
    <property type="project" value="UniProtKB-UniRule"/>
</dbReference>
<dbReference type="CDD" id="cd08646">
    <property type="entry name" value="FMT_core_Met-tRNA-FMT_N"/>
    <property type="match status" value="1"/>
</dbReference>
<dbReference type="CDD" id="cd08704">
    <property type="entry name" value="Met_tRNA_FMT_C"/>
    <property type="match status" value="1"/>
</dbReference>
<dbReference type="Gene3D" id="3.40.50.12230">
    <property type="match status" value="1"/>
</dbReference>
<dbReference type="HAMAP" id="MF_00182">
    <property type="entry name" value="Formyl_trans"/>
    <property type="match status" value="1"/>
</dbReference>
<dbReference type="InterPro" id="IPR005794">
    <property type="entry name" value="Fmt"/>
</dbReference>
<dbReference type="InterPro" id="IPR005793">
    <property type="entry name" value="Formyl_trans_C"/>
</dbReference>
<dbReference type="InterPro" id="IPR002376">
    <property type="entry name" value="Formyl_transf_N"/>
</dbReference>
<dbReference type="InterPro" id="IPR036477">
    <property type="entry name" value="Formyl_transf_N_sf"/>
</dbReference>
<dbReference type="InterPro" id="IPR011034">
    <property type="entry name" value="Formyl_transferase-like_C_sf"/>
</dbReference>
<dbReference type="InterPro" id="IPR044135">
    <property type="entry name" value="Met-tRNA-FMT_C"/>
</dbReference>
<dbReference type="InterPro" id="IPR041711">
    <property type="entry name" value="Met-tRNA-FMT_N"/>
</dbReference>
<dbReference type="NCBIfam" id="TIGR00460">
    <property type="entry name" value="fmt"/>
    <property type="match status" value="1"/>
</dbReference>
<dbReference type="PANTHER" id="PTHR11138">
    <property type="entry name" value="METHIONYL-TRNA FORMYLTRANSFERASE"/>
    <property type="match status" value="1"/>
</dbReference>
<dbReference type="PANTHER" id="PTHR11138:SF5">
    <property type="entry name" value="METHIONYL-TRNA FORMYLTRANSFERASE, MITOCHONDRIAL"/>
    <property type="match status" value="1"/>
</dbReference>
<dbReference type="Pfam" id="PF02911">
    <property type="entry name" value="Formyl_trans_C"/>
    <property type="match status" value="1"/>
</dbReference>
<dbReference type="Pfam" id="PF00551">
    <property type="entry name" value="Formyl_trans_N"/>
    <property type="match status" value="1"/>
</dbReference>
<dbReference type="SUPFAM" id="SSF50486">
    <property type="entry name" value="FMT C-terminal domain-like"/>
    <property type="match status" value="1"/>
</dbReference>
<dbReference type="SUPFAM" id="SSF53328">
    <property type="entry name" value="Formyltransferase"/>
    <property type="match status" value="1"/>
</dbReference>
<organism>
    <name type="scientific">Porphyromonas gingivalis (strain ATCC 33277 / DSM 20709 / CIP 103683 / JCM 12257 / NCTC 11834 / 2561)</name>
    <dbReference type="NCBI Taxonomy" id="431947"/>
    <lineage>
        <taxon>Bacteria</taxon>
        <taxon>Pseudomonadati</taxon>
        <taxon>Bacteroidota</taxon>
        <taxon>Bacteroidia</taxon>
        <taxon>Bacteroidales</taxon>
        <taxon>Porphyromonadaceae</taxon>
        <taxon>Porphyromonas</taxon>
    </lineage>
</organism>